<organism>
    <name type="scientific">Shigella flexneri serotype 5b (strain 8401)</name>
    <dbReference type="NCBI Taxonomy" id="373384"/>
    <lineage>
        <taxon>Bacteria</taxon>
        <taxon>Pseudomonadati</taxon>
        <taxon>Pseudomonadota</taxon>
        <taxon>Gammaproteobacteria</taxon>
        <taxon>Enterobacterales</taxon>
        <taxon>Enterobacteriaceae</taxon>
        <taxon>Shigella</taxon>
    </lineage>
</organism>
<dbReference type="EMBL" id="CP000266">
    <property type="protein sequence ID" value="ABF03147.1"/>
    <property type="molecule type" value="Genomic_DNA"/>
</dbReference>
<dbReference type="RefSeq" id="WP_000572706.1">
    <property type="nucleotide sequence ID" value="NC_008258.1"/>
</dbReference>
<dbReference type="SMR" id="Q0T6B8"/>
<dbReference type="KEGG" id="sfv:SFV_0925"/>
<dbReference type="HOGENOM" id="CLU_004430_0_0_6"/>
<dbReference type="Proteomes" id="UP000000659">
    <property type="component" value="Chromosome"/>
</dbReference>
<dbReference type="GO" id="GO:0005737">
    <property type="term" value="C:cytoplasm"/>
    <property type="evidence" value="ECO:0007669"/>
    <property type="project" value="UniProtKB-UniRule"/>
</dbReference>
<dbReference type="GO" id="GO:0009295">
    <property type="term" value="C:nucleoid"/>
    <property type="evidence" value="ECO:0007669"/>
    <property type="project" value="UniProtKB-SubCell"/>
</dbReference>
<dbReference type="GO" id="GO:0005524">
    <property type="term" value="F:ATP binding"/>
    <property type="evidence" value="ECO:0007669"/>
    <property type="project" value="UniProtKB-UniRule"/>
</dbReference>
<dbReference type="GO" id="GO:0003677">
    <property type="term" value="F:DNA binding"/>
    <property type="evidence" value="ECO:0007669"/>
    <property type="project" value="UniProtKB-UniRule"/>
</dbReference>
<dbReference type="GO" id="GO:0051301">
    <property type="term" value="P:cell division"/>
    <property type="evidence" value="ECO:0007669"/>
    <property type="project" value="UniProtKB-KW"/>
</dbReference>
<dbReference type="GO" id="GO:0030261">
    <property type="term" value="P:chromosome condensation"/>
    <property type="evidence" value="ECO:0007669"/>
    <property type="project" value="UniProtKB-KW"/>
</dbReference>
<dbReference type="GO" id="GO:0007059">
    <property type="term" value="P:chromosome segregation"/>
    <property type="evidence" value="ECO:0007669"/>
    <property type="project" value="UniProtKB-UniRule"/>
</dbReference>
<dbReference type="GO" id="GO:0006260">
    <property type="term" value="P:DNA replication"/>
    <property type="evidence" value="ECO:0007669"/>
    <property type="project" value="UniProtKB-UniRule"/>
</dbReference>
<dbReference type="FunFam" id="3.30.70.3500:FF:000001">
    <property type="entry name" value="Chromosome partition protein MukB"/>
    <property type="match status" value="1"/>
</dbReference>
<dbReference type="FunFam" id="3.40.1140.10:FF:000001">
    <property type="entry name" value="Chromosome partition protein MukB"/>
    <property type="match status" value="1"/>
</dbReference>
<dbReference type="FunFam" id="3.40.1140.10:FF:000002">
    <property type="entry name" value="Chromosome partition protein MukB"/>
    <property type="match status" value="1"/>
</dbReference>
<dbReference type="Gene3D" id="1.20.58.850">
    <property type="match status" value="1"/>
</dbReference>
<dbReference type="Gene3D" id="3.40.1140.10">
    <property type="match status" value="2"/>
</dbReference>
<dbReference type="Gene3D" id="1.20.5.420">
    <property type="entry name" value="Immunoglobulin FC, subunit C"/>
    <property type="match status" value="1"/>
</dbReference>
<dbReference type="Gene3D" id="3.30.70.3500">
    <property type="entry name" value="MukB, hinge domain"/>
    <property type="match status" value="1"/>
</dbReference>
<dbReference type="HAMAP" id="MF_01800">
    <property type="entry name" value="MukB"/>
    <property type="match status" value="1"/>
</dbReference>
<dbReference type="InterPro" id="IPR012090">
    <property type="entry name" value="MukB"/>
</dbReference>
<dbReference type="InterPro" id="IPR050308">
    <property type="entry name" value="MukB/SMC"/>
</dbReference>
<dbReference type="InterPro" id="IPR032520">
    <property type="entry name" value="MukB_hinge"/>
</dbReference>
<dbReference type="InterPro" id="IPR042501">
    <property type="entry name" value="MukB_hinge_sf"/>
</dbReference>
<dbReference type="InterPro" id="IPR007406">
    <property type="entry name" value="MukB_N_dom"/>
</dbReference>
<dbReference type="InterPro" id="IPR027417">
    <property type="entry name" value="P-loop_NTPase"/>
</dbReference>
<dbReference type="NCBIfam" id="NF003422">
    <property type="entry name" value="PRK04863.1"/>
    <property type="match status" value="1"/>
</dbReference>
<dbReference type="PANTHER" id="PTHR42963">
    <property type="entry name" value="CHROMOSOME PARTITION PROTEIN MUKB"/>
    <property type="match status" value="1"/>
</dbReference>
<dbReference type="PANTHER" id="PTHR42963:SF1">
    <property type="entry name" value="DUF4476 DOMAIN-CONTAINING PROTEIN"/>
    <property type="match status" value="1"/>
</dbReference>
<dbReference type="Pfam" id="PF04310">
    <property type="entry name" value="MukB"/>
    <property type="match status" value="1"/>
</dbReference>
<dbReference type="Pfam" id="PF16330">
    <property type="entry name" value="MukB_hinge"/>
    <property type="match status" value="1"/>
</dbReference>
<dbReference type="Pfam" id="PF13558">
    <property type="entry name" value="SbcC_Walker_B"/>
    <property type="match status" value="1"/>
</dbReference>
<dbReference type="PIRSF" id="PIRSF005246">
    <property type="entry name" value="MukB"/>
    <property type="match status" value="1"/>
</dbReference>
<dbReference type="SUPFAM" id="SSF52540">
    <property type="entry name" value="P-loop containing nucleoside triphosphate hydrolases"/>
    <property type="match status" value="2"/>
</dbReference>
<reference key="1">
    <citation type="journal article" date="2006" name="BMC Genomics">
        <title>Complete genome sequence of Shigella flexneri 5b and comparison with Shigella flexneri 2a.</title>
        <authorList>
            <person name="Nie H."/>
            <person name="Yang F."/>
            <person name="Zhang X."/>
            <person name="Yang J."/>
            <person name="Chen L."/>
            <person name="Wang J."/>
            <person name="Xiong Z."/>
            <person name="Peng J."/>
            <person name="Sun L."/>
            <person name="Dong J."/>
            <person name="Xue Y."/>
            <person name="Xu X."/>
            <person name="Chen S."/>
            <person name="Yao Z."/>
            <person name="Shen Y."/>
            <person name="Jin Q."/>
        </authorList>
    </citation>
    <scope>NUCLEOTIDE SEQUENCE [LARGE SCALE GENOMIC DNA]</scope>
    <source>
        <strain>8401</strain>
    </source>
</reference>
<accession>Q0T6B8</accession>
<name>MUKB_SHIF8</name>
<sequence length="1486" mass="170300">MIERGKFRSLTLINWNGFFARTFDLDELVTTLSGGNGAGKSTTMAAFVTALIPDLTLLHFRNTTEAGATSGSRDKGLHGKLKAGVCYSMLDTINSRHQRVVVGVRLQQVAGRDRKVDIKPFAIQGLPMSVQPTQLVTETLNERQARVLPLNELKDKLEAMEGVQFKQFNSITDYHSLMFDLGIIARRLRSASDRSKFYRLIEASLYGGISSAITRSLRDYLLPENSGVRKAFQDMEAALRENRMTLEAIRVTQSDRDLFKHLISEATNYVAADYMRHANERRVHLDKALEFRRELHTSRQQLAAEQYKHVDMARELAEHNGAEGDLEADYQAASDHLNLVQTALRQQEKIERYEVDLDELQIRLEEQNEVVAEAIERQEENEARAEAAELEVDELKSQLADYQQALDVQQTRAIQYNQAIAALNRAKELCHLPDLTADSAAEWLETFQAKELEATEKMLSLEQKMSMAQTAHSQFEQAYQLVVAINGPLARNEAWDVARELLREGVDQRHLAEQVQPLRMRLSELEQRLREQQEAERLLADFCKRQGKNFDIDELEALHQELEARIASLSDSVSNAREERMALRQEQEQLQSRIQSLMQRAPVWLAAQNSLNQLSEQCGEEFSSSQDVTEYLQQLLEREREAIVERDEVGARKNAVDEEIERLSQPGGSEDQRLNALAERFGGVLLSEIYDDVSLEDAPYFSALYGPSRHAIVVPDLSQVTEHLEGLTDCPEDLYLIEGDPQSFDDSVFSVDELEKAVVVKIADRQWRYSRFPEVPLFGRAARESRIESLHAEREVLSERFATLSFDVQKTQRLHQAFSRFIGSHLAVAFESDPEAEIRQLNSRRVELERALSNHENDNQQQRIQFEQAKEGVTALNRILPRLNLLADDSLADRVDEIRERLDEAQEAARFVQQFGNQLAKLEPIVSVLQSDPEQFEQLKEDYAYSQQMQRDARQQAFALTEVVQRRAHFSYSDSAEMLSGNSDLNEKLRERLEQAEAERTRAREALRGHAAQLSQYNQVLASLKSSYDTKKELLNDLQRELQDIGVRADSGAEERARIRRDELHAQLSNNRSRRNQLEKALTFCEAEMDNLTRKLRKLERDYFEMREQVVTAKAGWCAVMRMVKDNGVERRLHRRELAYLSADDLRSMSDKALGALRLAVADNEHLRDVLRMSEDPKRPERKIQFFVAVYQHLRERIRQDIIRTDDPVEAIEQMEIELSRLTEELTSREQKLAISSRSVANIIRKTIQREQNRIRMLNQGLQNVSFGQVNSVRLNVNVRETHAMLLDVLSEQHEQHQDLFNSNRLTFSEALAKLYQRLNPQIDMGQRTPQTIGEELLDYRNYLEMEVEVNRGSDGWLRAESGALSTGEAIGTGMSILVMVVQSWEDESRRLRGKDISPCRLLFLDEAARLDARSIATLFELCERLQMQLIIAAPENISPEKGTTYKLVRKVFQNTEHVHVVGLRGFAPQLPETLLGRDEAPSQAS</sequence>
<evidence type="ECO:0000255" key="1">
    <source>
        <dbReference type="HAMAP-Rule" id="MF_01800"/>
    </source>
</evidence>
<comment type="function">
    <text evidence="1">Plays a central role in chromosome condensation, segregation and cell cycle progression. Functions as a homodimer, which is essential for chromosome partition. Involved in negative DNA supercoiling in vivo, and by this means organize and compact chromosomes. May achieve or facilitate chromosome segregation by condensation DNA from both sides of a centrally located replisome during cell division.</text>
</comment>
<comment type="subunit">
    <text evidence="1">Homodimerization via its hinge domain. Binds to DNA via its C-terminal region. Interacts, and probably forms a ternary complex, with MukE and MukF via its C-terminal region. The complex formation is stimulated by calcium or magnesium. Interacts with tubulin-related protein FtsZ.</text>
</comment>
<comment type="subcellular location">
    <subcellularLocation>
        <location evidence="1">Cytoplasm</location>
        <location evidence="1">Nucleoid</location>
    </subcellularLocation>
    <text evidence="1">Restricted to the nucleoid region.</text>
</comment>
<comment type="domain">
    <text evidence="1">The hinge domain, which separates the large intramolecular coiled coil regions, allows the homodimerization, forming a V-shaped homodimer.</text>
</comment>
<comment type="similarity">
    <text evidence="1">Belongs to the SMC family. MukB subfamily.</text>
</comment>
<gene>
    <name evidence="1" type="primary">mukB</name>
    <name type="ordered locus">SFV_0925</name>
</gene>
<proteinExistence type="inferred from homology"/>
<keyword id="KW-0067">ATP-binding</keyword>
<keyword id="KW-0131">Cell cycle</keyword>
<keyword id="KW-0132">Cell division</keyword>
<keyword id="KW-0159">Chromosome partition</keyword>
<keyword id="KW-0175">Coiled coil</keyword>
<keyword id="KW-0963">Cytoplasm</keyword>
<keyword id="KW-0226">DNA condensation</keyword>
<keyword id="KW-0238">DNA-binding</keyword>
<keyword id="KW-0547">Nucleotide-binding</keyword>
<protein>
    <recommendedName>
        <fullName evidence="1">Chromosome partition protein MukB</fullName>
    </recommendedName>
    <alternativeName>
        <fullName evidence="1">Structural maintenance of chromosome-related protein</fullName>
    </alternativeName>
</protein>
<feature type="chain" id="PRO_1000069914" description="Chromosome partition protein MukB">
    <location>
        <begin position="1"/>
        <end position="1486"/>
    </location>
</feature>
<feature type="region of interest" description="Flexible hinge" evidence="1">
    <location>
        <begin position="666"/>
        <end position="783"/>
    </location>
</feature>
<feature type="coiled-coil region" evidence="1">
    <location>
        <begin position="326"/>
        <end position="418"/>
    </location>
</feature>
<feature type="coiled-coil region" evidence="1">
    <location>
        <begin position="444"/>
        <end position="480"/>
    </location>
</feature>
<feature type="coiled-coil region" evidence="1">
    <location>
        <begin position="509"/>
        <end position="603"/>
    </location>
</feature>
<feature type="coiled-coil region" evidence="1">
    <location>
        <begin position="835"/>
        <end position="923"/>
    </location>
</feature>
<feature type="coiled-coil region" evidence="1">
    <location>
        <begin position="977"/>
        <end position="1115"/>
    </location>
</feature>
<feature type="coiled-coil region" evidence="1">
    <location>
        <begin position="1209"/>
        <end position="1266"/>
    </location>
</feature>
<feature type="binding site" evidence="1">
    <location>
        <begin position="34"/>
        <end position="41"/>
    </location>
    <ligand>
        <name>ATP</name>
        <dbReference type="ChEBI" id="CHEBI:30616"/>
    </ligand>
</feature>